<dbReference type="EC" id="2.4.99.28" evidence="1"/>
<dbReference type="EMBL" id="CP000736">
    <property type="protein sequence ID" value="ABR52796.1"/>
    <property type="molecule type" value="Genomic_DNA"/>
</dbReference>
<dbReference type="SMR" id="A6U2X8"/>
<dbReference type="CAZy" id="GT51">
    <property type="family name" value="Glycosyltransferase Family 51"/>
</dbReference>
<dbReference type="KEGG" id="sah:SaurJH1_1962"/>
<dbReference type="HOGENOM" id="CLU_006354_1_2_9"/>
<dbReference type="UniPathway" id="UPA00219"/>
<dbReference type="GO" id="GO:0030288">
    <property type="term" value="C:outer membrane-bounded periplasmic space"/>
    <property type="evidence" value="ECO:0007669"/>
    <property type="project" value="TreeGrafter"/>
</dbReference>
<dbReference type="GO" id="GO:0005886">
    <property type="term" value="C:plasma membrane"/>
    <property type="evidence" value="ECO:0007669"/>
    <property type="project" value="UniProtKB-SubCell"/>
</dbReference>
<dbReference type="GO" id="GO:0008955">
    <property type="term" value="F:peptidoglycan glycosyltransferase activity"/>
    <property type="evidence" value="ECO:0007669"/>
    <property type="project" value="UniProtKB-UniRule"/>
</dbReference>
<dbReference type="GO" id="GO:0071555">
    <property type="term" value="P:cell wall organization"/>
    <property type="evidence" value="ECO:0007669"/>
    <property type="project" value="UniProtKB-KW"/>
</dbReference>
<dbReference type="GO" id="GO:0009252">
    <property type="term" value="P:peptidoglycan biosynthetic process"/>
    <property type="evidence" value="ECO:0007669"/>
    <property type="project" value="UniProtKB-UniRule"/>
</dbReference>
<dbReference type="GO" id="GO:0008360">
    <property type="term" value="P:regulation of cell shape"/>
    <property type="evidence" value="ECO:0007669"/>
    <property type="project" value="UniProtKB-KW"/>
</dbReference>
<dbReference type="Gene3D" id="1.10.3810.10">
    <property type="entry name" value="Biosynthetic peptidoglycan transglycosylase-like"/>
    <property type="match status" value="1"/>
</dbReference>
<dbReference type="HAMAP" id="MF_01434">
    <property type="entry name" value="MGT"/>
    <property type="match status" value="1"/>
</dbReference>
<dbReference type="InterPro" id="IPR001264">
    <property type="entry name" value="Glyco_trans_51"/>
</dbReference>
<dbReference type="InterPro" id="IPR050396">
    <property type="entry name" value="Glycosyltr_51/Transpeptidase"/>
</dbReference>
<dbReference type="InterPro" id="IPR023346">
    <property type="entry name" value="Lysozyme-like_dom_sf"/>
</dbReference>
<dbReference type="InterPro" id="IPR022978">
    <property type="entry name" value="Monofunct_glyco_trans"/>
</dbReference>
<dbReference type="InterPro" id="IPR036950">
    <property type="entry name" value="PBP_transglycosylase"/>
</dbReference>
<dbReference type="NCBIfam" id="NF010008">
    <property type="entry name" value="PRK13481.1"/>
    <property type="match status" value="1"/>
</dbReference>
<dbReference type="PANTHER" id="PTHR32282">
    <property type="entry name" value="BINDING PROTEIN TRANSPEPTIDASE, PUTATIVE-RELATED"/>
    <property type="match status" value="1"/>
</dbReference>
<dbReference type="PANTHER" id="PTHR32282:SF11">
    <property type="entry name" value="PENICILLIN-BINDING PROTEIN 1B"/>
    <property type="match status" value="1"/>
</dbReference>
<dbReference type="Pfam" id="PF00912">
    <property type="entry name" value="Transgly"/>
    <property type="match status" value="1"/>
</dbReference>
<dbReference type="SUPFAM" id="SSF53955">
    <property type="entry name" value="Lysozyme-like"/>
    <property type="match status" value="1"/>
</dbReference>
<keyword id="KW-1003">Cell membrane</keyword>
<keyword id="KW-0133">Cell shape</keyword>
<keyword id="KW-0961">Cell wall biogenesis/degradation</keyword>
<keyword id="KW-0328">Glycosyltransferase</keyword>
<keyword id="KW-0472">Membrane</keyword>
<keyword id="KW-0573">Peptidoglycan synthesis</keyword>
<keyword id="KW-0808">Transferase</keyword>
<keyword id="KW-0812">Transmembrane</keyword>
<keyword id="KW-1133">Transmembrane helix</keyword>
<sequence length="269" mass="31428">MKRSDRYSNSNEHFEHMKHEPHYNTYYQPVGKPPKKKKSKRILLKILLTILIIIALFIGIMYFLSTRDNVDELRKIENKSSFVSADNVPEYVKGAFISMEDERFYNHHGFDLKGTTRALFSTISDRDVQGGSTITQQVVKNYFYDNDRSFTRKVKELFVAHRVEKQYNKNEILSFYLNNIYFGDNQYTLEGAANHYFGTTVNKNSTTMSHITVLQSAILASKVNAPSVYNINNMSENFTQRVSTNLEKMKQQNYINETQYQQAMSQLNR</sequence>
<evidence type="ECO:0000255" key="1">
    <source>
        <dbReference type="HAMAP-Rule" id="MF_01434"/>
    </source>
</evidence>
<feature type="chain" id="PRO_1000087439" description="Monofunctional glycosyltransferase">
    <location>
        <begin position="1"/>
        <end position="269"/>
    </location>
</feature>
<feature type="transmembrane region" description="Helical" evidence="1">
    <location>
        <begin position="46"/>
        <end position="66"/>
    </location>
</feature>
<reference key="1">
    <citation type="submission" date="2007-06" db="EMBL/GenBank/DDBJ databases">
        <title>Complete sequence of chromosome of Staphylococcus aureus subsp. aureus JH1.</title>
        <authorList>
            <consortium name="US DOE Joint Genome Institute"/>
            <person name="Copeland A."/>
            <person name="Lucas S."/>
            <person name="Lapidus A."/>
            <person name="Barry K."/>
            <person name="Detter J.C."/>
            <person name="Glavina del Rio T."/>
            <person name="Hammon N."/>
            <person name="Israni S."/>
            <person name="Dalin E."/>
            <person name="Tice H."/>
            <person name="Pitluck S."/>
            <person name="Chain P."/>
            <person name="Malfatti S."/>
            <person name="Shin M."/>
            <person name="Vergez L."/>
            <person name="Schmutz J."/>
            <person name="Larimer F."/>
            <person name="Land M."/>
            <person name="Hauser L."/>
            <person name="Kyrpides N."/>
            <person name="Ivanova N."/>
            <person name="Tomasz A."/>
            <person name="Richardson P."/>
        </authorList>
    </citation>
    <scope>NUCLEOTIDE SEQUENCE [LARGE SCALE GENOMIC DNA]</scope>
    <source>
        <strain>JH1</strain>
    </source>
</reference>
<organism>
    <name type="scientific">Staphylococcus aureus (strain JH1)</name>
    <dbReference type="NCBI Taxonomy" id="359787"/>
    <lineage>
        <taxon>Bacteria</taxon>
        <taxon>Bacillati</taxon>
        <taxon>Bacillota</taxon>
        <taxon>Bacilli</taxon>
        <taxon>Bacillales</taxon>
        <taxon>Staphylococcaceae</taxon>
        <taxon>Staphylococcus</taxon>
    </lineage>
</organism>
<proteinExistence type="inferred from homology"/>
<gene>
    <name evidence="1" type="primary">mgt</name>
    <name type="ordered locus">SaurJH1_1962</name>
</gene>
<comment type="function">
    <text evidence="1">Peptidoglycan polymerase that catalyzes glycan chain elongation using lipid-linked disaccharide-pentapeptide as the substrate.</text>
</comment>
<comment type="catalytic activity">
    <reaction evidence="1">
        <text>[GlcNAc-(1-&gt;4)-Mur2Ac(oyl-L-Ala-gamma-D-Glu-L-Lys-D-Ala-D-Ala)](n)-di-trans,octa-cis-undecaprenyl diphosphate + beta-D-GlcNAc-(1-&gt;4)-Mur2Ac(oyl-L-Ala-gamma-D-Glu-L-Lys-D-Ala-D-Ala)-di-trans,octa-cis-undecaprenyl diphosphate = [GlcNAc-(1-&gt;4)-Mur2Ac(oyl-L-Ala-gamma-D-Glu-L-Lys-D-Ala-D-Ala)](n+1)-di-trans,octa-cis-undecaprenyl diphosphate + di-trans,octa-cis-undecaprenyl diphosphate + H(+)</text>
        <dbReference type="Rhea" id="RHEA:23708"/>
        <dbReference type="Rhea" id="RHEA-COMP:9602"/>
        <dbReference type="Rhea" id="RHEA-COMP:9603"/>
        <dbReference type="ChEBI" id="CHEBI:15378"/>
        <dbReference type="ChEBI" id="CHEBI:58405"/>
        <dbReference type="ChEBI" id="CHEBI:60033"/>
        <dbReference type="ChEBI" id="CHEBI:78435"/>
        <dbReference type="EC" id="2.4.99.28"/>
    </reaction>
</comment>
<comment type="pathway">
    <text evidence="1">Cell wall biogenesis; peptidoglycan biosynthesis.</text>
</comment>
<comment type="subcellular location">
    <subcellularLocation>
        <location evidence="1">Cell membrane</location>
        <topology evidence="1">Single-pass membrane protein</topology>
    </subcellularLocation>
</comment>
<comment type="similarity">
    <text evidence="1">Belongs to the glycosyltransferase 51 family.</text>
</comment>
<accession>A6U2X8</accession>
<name>MGT_STAA2</name>
<protein>
    <recommendedName>
        <fullName evidence="1">Monofunctional glycosyltransferase</fullName>
        <shortName evidence="1">MGT</shortName>
        <ecNumber evidence="1">2.4.99.28</ecNumber>
    </recommendedName>
    <alternativeName>
        <fullName evidence="1">Peptidoglycan TGase</fullName>
    </alternativeName>
</protein>